<organism>
    <name type="scientific">Chloroflexus aurantiacus (strain ATCC 29366 / DSM 635 / J-10-fl)</name>
    <dbReference type="NCBI Taxonomy" id="324602"/>
    <lineage>
        <taxon>Bacteria</taxon>
        <taxon>Bacillati</taxon>
        <taxon>Chloroflexota</taxon>
        <taxon>Chloroflexia</taxon>
        <taxon>Chloroflexales</taxon>
        <taxon>Chloroflexineae</taxon>
        <taxon>Chloroflexaceae</taxon>
        <taxon>Chloroflexus</taxon>
    </lineage>
</organism>
<sequence>MAYPLLVLVDGHALAYRAFFALRESGLRSSRGEPTYAVFGFAQILLTALAEYRPDYAAVAFDVGRTFRDDLYAEYKAGRAETPEEFYPQFERIKQLVQALNIPIYTAEGYEADDVIGTLARQATERGVDTIILTGDSDVLQLVNDHVRVALANPYGGKTSVTLYDLEQVRKRYDGLEPDQLADLRGLKGDTSDNIPGVRGIGEKGAIALLKQFRSLDALLEQIDAAPKRYQTLLREQAEAARFSRQLATIVTDVPVQLDLEAARIGVYDRSAVMALFQELEFGVSSNLIKKLPSVVQAPTLAELPADLPAAPLTTAPTQLSLFAGESEPAQPTAEPPPVTIVRDATALADLVSRLRNAPAFAFDTECTSLQPVASDLVGISIAIAPDTVCYIPVGHQSETQVPCGEVVTALAPFFANPQQPKFAHNAKFDMEVLAGAGIKVSGLAFDTMIAAAMLGKRQGLKDLAFYELKLPEPPTTIEDLIGRGNKQISFAEVPVEQAAPYAAADALYTLRLTERLQRQLEAEPALHDLYYRVELPLIEVLTDMELTGIRLDQEYLRELGRHFAQRIADLVERIYQQAGGPFNINSGQQLNDVLFGRLGIDPRAHGLSKLKSGGYSITAEVLEELSQLYPIAADILTYRQLTKLKSTYIDALPDLVNPRTGRIHTSYNQLGAATGRLSSNNPNLQNIPVRTEEGREIRRAFVAEPGWRFVAADYSQIELRVLAHMSGDENLIAAFQQGLDIHAATASRLFGVEPTAVDKNQRRVAKTVVFGVIYGISAFGLAQRLGIERDLARQLIDNLFAQFPGIRRYIDQTLEFGRQHGYVQTLFGRRRVMEDLRASGARRAAAEREAINAPIQGTAADLMKMAMVNVHRALREQGLRTRLLLQVHDELIAEAPEDEVEPAARLLRDVMSSVYRDLVVPLSVNLEVGPNWDEMSPLAMG</sequence>
<protein>
    <recommendedName>
        <fullName>DNA polymerase I</fullName>
        <shortName>POL I</shortName>
        <ecNumber>2.7.7.7</ecNumber>
    </recommendedName>
</protein>
<accession>O08307</accession>
<accession>A9WD23</accession>
<gene>
    <name type="primary">polA</name>
    <name type="ordered locus">Caur_0341</name>
</gene>
<dbReference type="EC" id="2.7.7.7"/>
<dbReference type="EMBL" id="Y12328">
    <property type="protein sequence ID" value="CAA72997.1"/>
    <property type="molecule type" value="Genomic_DNA"/>
</dbReference>
<dbReference type="EMBL" id="CP000909">
    <property type="protein sequence ID" value="ABY33592.1"/>
    <property type="molecule type" value="Genomic_DNA"/>
</dbReference>
<dbReference type="RefSeq" id="WP_012256248.1">
    <property type="nucleotide sequence ID" value="NC_010175.1"/>
</dbReference>
<dbReference type="RefSeq" id="YP_001633981.1">
    <property type="nucleotide sequence ID" value="NC_010175.1"/>
</dbReference>
<dbReference type="SMR" id="O08307"/>
<dbReference type="FunCoup" id="O08307">
    <property type="interactions" value="272"/>
</dbReference>
<dbReference type="STRING" id="324602.Caur_0341"/>
<dbReference type="EnsemblBacteria" id="ABY33592">
    <property type="protein sequence ID" value="ABY33592"/>
    <property type="gene ID" value="Caur_0341"/>
</dbReference>
<dbReference type="KEGG" id="cau:Caur_0341"/>
<dbReference type="PATRIC" id="fig|324602.8.peg.392"/>
<dbReference type="eggNOG" id="COG0258">
    <property type="taxonomic scope" value="Bacteria"/>
</dbReference>
<dbReference type="eggNOG" id="COG0749">
    <property type="taxonomic scope" value="Bacteria"/>
</dbReference>
<dbReference type="HOGENOM" id="CLU_004675_0_0_0"/>
<dbReference type="InParanoid" id="O08307"/>
<dbReference type="Proteomes" id="UP000002008">
    <property type="component" value="Chromosome"/>
</dbReference>
<dbReference type="GO" id="GO:0008408">
    <property type="term" value="F:3'-5' exonuclease activity"/>
    <property type="evidence" value="ECO:0007669"/>
    <property type="project" value="InterPro"/>
</dbReference>
<dbReference type="GO" id="GO:0008409">
    <property type="term" value="F:5'-3' exonuclease activity"/>
    <property type="evidence" value="ECO:0007669"/>
    <property type="project" value="InterPro"/>
</dbReference>
<dbReference type="GO" id="GO:0003677">
    <property type="term" value="F:DNA binding"/>
    <property type="evidence" value="ECO:0007669"/>
    <property type="project" value="UniProtKB-KW"/>
</dbReference>
<dbReference type="GO" id="GO:0003887">
    <property type="term" value="F:DNA-directed DNA polymerase activity"/>
    <property type="evidence" value="ECO:0000318"/>
    <property type="project" value="GO_Central"/>
</dbReference>
<dbReference type="GO" id="GO:0006261">
    <property type="term" value="P:DNA-templated DNA replication"/>
    <property type="evidence" value="ECO:0007669"/>
    <property type="project" value="InterPro"/>
</dbReference>
<dbReference type="GO" id="GO:0006302">
    <property type="term" value="P:double-strand break repair"/>
    <property type="evidence" value="ECO:0000318"/>
    <property type="project" value="GO_Central"/>
</dbReference>
<dbReference type="CDD" id="cd08637">
    <property type="entry name" value="DNA_pol_A_pol_I_C"/>
    <property type="match status" value="1"/>
</dbReference>
<dbReference type="CDD" id="cd06139">
    <property type="entry name" value="DNA_polA_I_Ecoli_like_exo"/>
    <property type="match status" value="1"/>
</dbReference>
<dbReference type="CDD" id="cd09898">
    <property type="entry name" value="H3TH_53EXO"/>
    <property type="match status" value="1"/>
</dbReference>
<dbReference type="CDD" id="cd09859">
    <property type="entry name" value="PIN_53EXO"/>
    <property type="match status" value="1"/>
</dbReference>
<dbReference type="FunFam" id="1.10.150.20:FF:000002">
    <property type="entry name" value="DNA polymerase I"/>
    <property type="match status" value="1"/>
</dbReference>
<dbReference type="FunFam" id="1.10.150.20:FF:000003">
    <property type="entry name" value="DNA polymerase I"/>
    <property type="match status" value="1"/>
</dbReference>
<dbReference type="FunFam" id="1.20.1060.10:FF:000001">
    <property type="entry name" value="DNA polymerase I"/>
    <property type="match status" value="1"/>
</dbReference>
<dbReference type="FunFam" id="3.40.50.1010:FF:000001">
    <property type="entry name" value="DNA polymerase I"/>
    <property type="match status" value="1"/>
</dbReference>
<dbReference type="Gene3D" id="3.30.70.370">
    <property type="match status" value="1"/>
</dbReference>
<dbReference type="Gene3D" id="1.10.150.20">
    <property type="entry name" value="5' to 3' exonuclease, C-terminal subdomain"/>
    <property type="match status" value="2"/>
</dbReference>
<dbReference type="Gene3D" id="3.40.50.1010">
    <property type="entry name" value="5'-nuclease"/>
    <property type="match status" value="1"/>
</dbReference>
<dbReference type="Gene3D" id="3.30.420.10">
    <property type="entry name" value="Ribonuclease H-like superfamily/Ribonuclease H"/>
    <property type="match status" value="1"/>
</dbReference>
<dbReference type="Gene3D" id="1.20.1060.10">
    <property type="entry name" value="Taq DNA Polymerase, Chain T, domain 4"/>
    <property type="match status" value="1"/>
</dbReference>
<dbReference type="InterPro" id="IPR002562">
    <property type="entry name" value="3'-5'_exonuclease_dom"/>
</dbReference>
<dbReference type="InterPro" id="IPR020046">
    <property type="entry name" value="5-3_exonucl_a-hlix_arch_N"/>
</dbReference>
<dbReference type="InterPro" id="IPR002421">
    <property type="entry name" value="5-3_exonuclease"/>
</dbReference>
<dbReference type="InterPro" id="IPR036279">
    <property type="entry name" value="5-3_exonuclease_C_sf"/>
</dbReference>
<dbReference type="InterPro" id="IPR019760">
    <property type="entry name" value="DNA-dir_DNA_pol_A_CS"/>
</dbReference>
<dbReference type="InterPro" id="IPR001098">
    <property type="entry name" value="DNA-dir_DNA_pol_A_palm_dom"/>
</dbReference>
<dbReference type="InterPro" id="IPR043502">
    <property type="entry name" value="DNA/RNA_pol_sf"/>
</dbReference>
<dbReference type="InterPro" id="IPR020045">
    <property type="entry name" value="DNA_polI_H3TH"/>
</dbReference>
<dbReference type="InterPro" id="IPR018320">
    <property type="entry name" value="DNA_polymerase_1"/>
</dbReference>
<dbReference type="InterPro" id="IPR002298">
    <property type="entry name" value="DNA_polymerase_A"/>
</dbReference>
<dbReference type="InterPro" id="IPR008918">
    <property type="entry name" value="HhH2"/>
</dbReference>
<dbReference type="InterPro" id="IPR029060">
    <property type="entry name" value="PIN-like_dom_sf"/>
</dbReference>
<dbReference type="InterPro" id="IPR012337">
    <property type="entry name" value="RNaseH-like_sf"/>
</dbReference>
<dbReference type="InterPro" id="IPR036397">
    <property type="entry name" value="RNaseH_sf"/>
</dbReference>
<dbReference type="NCBIfam" id="TIGR00593">
    <property type="entry name" value="pola"/>
    <property type="match status" value="1"/>
</dbReference>
<dbReference type="NCBIfam" id="NF004397">
    <property type="entry name" value="PRK05755.1"/>
    <property type="match status" value="1"/>
</dbReference>
<dbReference type="PANTHER" id="PTHR10133">
    <property type="entry name" value="DNA POLYMERASE I"/>
    <property type="match status" value="1"/>
</dbReference>
<dbReference type="PANTHER" id="PTHR10133:SF27">
    <property type="entry name" value="DNA POLYMERASE NU"/>
    <property type="match status" value="1"/>
</dbReference>
<dbReference type="Pfam" id="PF01367">
    <property type="entry name" value="5_3_exonuc"/>
    <property type="match status" value="1"/>
</dbReference>
<dbReference type="Pfam" id="PF02739">
    <property type="entry name" value="5_3_exonuc_N"/>
    <property type="match status" value="1"/>
</dbReference>
<dbReference type="Pfam" id="PF00476">
    <property type="entry name" value="DNA_pol_A"/>
    <property type="match status" value="1"/>
</dbReference>
<dbReference type="Pfam" id="PF01612">
    <property type="entry name" value="DNA_pol_A_exo1"/>
    <property type="match status" value="1"/>
</dbReference>
<dbReference type="PRINTS" id="PR00868">
    <property type="entry name" value="DNAPOLI"/>
</dbReference>
<dbReference type="SMART" id="SM00474">
    <property type="entry name" value="35EXOc"/>
    <property type="match status" value="1"/>
</dbReference>
<dbReference type="SMART" id="SM00475">
    <property type="entry name" value="53EXOc"/>
    <property type="match status" value="1"/>
</dbReference>
<dbReference type="SMART" id="SM00279">
    <property type="entry name" value="HhH2"/>
    <property type="match status" value="1"/>
</dbReference>
<dbReference type="SMART" id="SM00482">
    <property type="entry name" value="POLAc"/>
    <property type="match status" value="1"/>
</dbReference>
<dbReference type="SUPFAM" id="SSF47807">
    <property type="entry name" value="5' to 3' exonuclease, C-terminal subdomain"/>
    <property type="match status" value="1"/>
</dbReference>
<dbReference type="SUPFAM" id="SSF56672">
    <property type="entry name" value="DNA/RNA polymerases"/>
    <property type="match status" value="1"/>
</dbReference>
<dbReference type="SUPFAM" id="SSF88723">
    <property type="entry name" value="PIN domain-like"/>
    <property type="match status" value="1"/>
</dbReference>
<dbReference type="SUPFAM" id="SSF53098">
    <property type="entry name" value="Ribonuclease H-like"/>
    <property type="match status" value="1"/>
</dbReference>
<dbReference type="PROSITE" id="PS00447">
    <property type="entry name" value="DNA_POLYMERASE_A"/>
    <property type="match status" value="1"/>
</dbReference>
<comment type="function">
    <text>In addition to polymerase activity, this DNA polymerase exhibits 3'-5' and 5'-3' exonuclease activity.</text>
</comment>
<comment type="catalytic activity">
    <reaction>
        <text>DNA(n) + a 2'-deoxyribonucleoside 5'-triphosphate = DNA(n+1) + diphosphate</text>
        <dbReference type="Rhea" id="RHEA:22508"/>
        <dbReference type="Rhea" id="RHEA-COMP:17339"/>
        <dbReference type="Rhea" id="RHEA-COMP:17340"/>
        <dbReference type="ChEBI" id="CHEBI:33019"/>
        <dbReference type="ChEBI" id="CHEBI:61560"/>
        <dbReference type="ChEBI" id="CHEBI:173112"/>
        <dbReference type="EC" id="2.7.7.7"/>
    </reaction>
</comment>
<comment type="subunit">
    <text>Single-chain monomer with multiple functions.</text>
</comment>
<comment type="similarity">
    <text evidence="2">Belongs to the DNA polymerase type-A family.</text>
</comment>
<proteinExistence type="inferred from homology"/>
<feature type="chain" id="PRO_0000101237" description="DNA polymerase I">
    <location>
        <begin position="1"/>
        <end position="942"/>
    </location>
</feature>
<feature type="domain" description="5'-3' exonuclease" evidence="1">
    <location>
        <begin position="177"/>
        <end position="269"/>
    </location>
</feature>
<feature type="domain" description="3'-5' exonuclease" evidence="1">
    <location>
        <begin position="340"/>
        <end position="522"/>
    </location>
</feature>
<name>DPO1_CHLAA</name>
<reference key="1">
    <citation type="journal article" date="1998" name="Genet. Anal.">
        <title>Cloning, sequence analysis and expression in E. coli of the DNA polymerase I gene from Chloroflexus aurantiacus, a green nonsulfur eubacterium.</title>
        <authorList>
            <person name="Tvermyr M."/>
            <person name="Kristiansen B.E."/>
            <person name="Kristensen T."/>
        </authorList>
    </citation>
    <scope>NUCLEOTIDE SEQUENCE [GENOMIC DNA]</scope>
</reference>
<reference key="2">
    <citation type="journal article" date="2011" name="BMC Genomics">
        <title>Complete genome sequence of the filamentous anoxygenic phototrophic bacterium Chloroflexus aurantiacus.</title>
        <authorList>
            <person name="Tang K.H."/>
            <person name="Barry K."/>
            <person name="Chertkov O."/>
            <person name="Dalin E."/>
            <person name="Han C.S."/>
            <person name="Hauser L.J."/>
            <person name="Honchak B.M."/>
            <person name="Karbach L.E."/>
            <person name="Land M.L."/>
            <person name="Lapidus A."/>
            <person name="Larimer F.W."/>
            <person name="Mikhailova N."/>
            <person name="Pitluck S."/>
            <person name="Pierson B.K."/>
            <person name="Blankenship R.E."/>
        </authorList>
    </citation>
    <scope>NUCLEOTIDE SEQUENCE [LARGE SCALE GENOMIC DNA]</scope>
    <source>
        <strain>ATCC 29366 / DSM 635 / J-10-fl</strain>
    </source>
</reference>
<keyword id="KW-0227">DNA damage</keyword>
<keyword id="KW-0234">DNA repair</keyword>
<keyword id="KW-0235">DNA replication</keyword>
<keyword id="KW-0238">DNA-binding</keyword>
<keyword id="KW-0239">DNA-directed DNA polymerase</keyword>
<keyword id="KW-0269">Exonuclease</keyword>
<keyword id="KW-0378">Hydrolase</keyword>
<keyword id="KW-0540">Nuclease</keyword>
<keyword id="KW-0548">Nucleotidyltransferase</keyword>
<keyword id="KW-1185">Reference proteome</keyword>
<keyword id="KW-0808">Transferase</keyword>
<evidence type="ECO:0000255" key="1"/>
<evidence type="ECO:0000305" key="2"/>